<feature type="chain" id="PRO_0000346974" description="Putative uncharacterized protein DDB_G0288767">
    <location>
        <begin position="1"/>
        <end position="202"/>
    </location>
</feature>
<sequence length="202" mass="24070">MNSFRSFSMQCVQSTTTWDSTTIRRIPYYRDEPEYDTETKLEFIRLFFNSLTNQFSKRTFTRNENKQPFESEMVNQFNDSKLKLNYCLKLVRNNFLCETGKFQLSIKARKCIGYNEDSRLDAVIFQTSDFRRKVIFKEEVANYEFTPSLVNESIKIKNECEDLTLLLNERRLVLNQNPILLSQLIDLASIIKNEKHEYNAFK</sequence>
<gene>
    <name type="ORF">DDB_G0288767</name>
</gene>
<name>Y9380_DICDI</name>
<accession>Q54IG9</accession>
<protein>
    <recommendedName>
        <fullName>Putative uncharacterized protein DDB_G0288767</fullName>
    </recommendedName>
</protein>
<reference key="1">
    <citation type="journal article" date="2005" name="Nature">
        <title>The genome of the social amoeba Dictyostelium discoideum.</title>
        <authorList>
            <person name="Eichinger L."/>
            <person name="Pachebat J.A."/>
            <person name="Gloeckner G."/>
            <person name="Rajandream M.A."/>
            <person name="Sucgang R."/>
            <person name="Berriman M."/>
            <person name="Song J."/>
            <person name="Olsen R."/>
            <person name="Szafranski K."/>
            <person name="Xu Q."/>
            <person name="Tunggal B."/>
            <person name="Kummerfeld S."/>
            <person name="Madera M."/>
            <person name="Konfortov B.A."/>
            <person name="Rivero F."/>
            <person name="Bankier A.T."/>
            <person name="Lehmann R."/>
            <person name="Hamlin N."/>
            <person name="Davies R."/>
            <person name="Gaudet P."/>
            <person name="Fey P."/>
            <person name="Pilcher K."/>
            <person name="Chen G."/>
            <person name="Saunders D."/>
            <person name="Sodergren E.J."/>
            <person name="Davis P."/>
            <person name="Kerhornou A."/>
            <person name="Nie X."/>
            <person name="Hall N."/>
            <person name="Anjard C."/>
            <person name="Hemphill L."/>
            <person name="Bason N."/>
            <person name="Farbrother P."/>
            <person name="Desany B."/>
            <person name="Just E."/>
            <person name="Morio T."/>
            <person name="Rost R."/>
            <person name="Churcher C.M."/>
            <person name="Cooper J."/>
            <person name="Haydock S."/>
            <person name="van Driessche N."/>
            <person name="Cronin A."/>
            <person name="Goodhead I."/>
            <person name="Muzny D.M."/>
            <person name="Mourier T."/>
            <person name="Pain A."/>
            <person name="Lu M."/>
            <person name="Harper D."/>
            <person name="Lindsay R."/>
            <person name="Hauser H."/>
            <person name="James K.D."/>
            <person name="Quiles M."/>
            <person name="Madan Babu M."/>
            <person name="Saito T."/>
            <person name="Buchrieser C."/>
            <person name="Wardroper A."/>
            <person name="Felder M."/>
            <person name="Thangavelu M."/>
            <person name="Johnson D."/>
            <person name="Knights A."/>
            <person name="Loulseged H."/>
            <person name="Mungall K.L."/>
            <person name="Oliver K."/>
            <person name="Price C."/>
            <person name="Quail M.A."/>
            <person name="Urushihara H."/>
            <person name="Hernandez J."/>
            <person name="Rabbinowitsch E."/>
            <person name="Steffen D."/>
            <person name="Sanders M."/>
            <person name="Ma J."/>
            <person name="Kohara Y."/>
            <person name="Sharp S."/>
            <person name="Simmonds M.N."/>
            <person name="Spiegler S."/>
            <person name="Tivey A."/>
            <person name="Sugano S."/>
            <person name="White B."/>
            <person name="Walker D."/>
            <person name="Woodward J.R."/>
            <person name="Winckler T."/>
            <person name="Tanaka Y."/>
            <person name="Shaulsky G."/>
            <person name="Schleicher M."/>
            <person name="Weinstock G.M."/>
            <person name="Rosenthal A."/>
            <person name="Cox E.C."/>
            <person name="Chisholm R.L."/>
            <person name="Gibbs R.A."/>
            <person name="Loomis W.F."/>
            <person name="Platzer M."/>
            <person name="Kay R.R."/>
            <person name="Williams J.G."/>
            <person name="Dear P.H."/>
            <person name="Noegel A.A."/>
            <person name="Barrell B.G."/>
            <person name="Kuspa A."/>
        </authorList>
    </citation>
    <scope>NUCLEOTIDE SEQUENCE [LARGE SCALE GENOMIC DNA]</scope>
    <source>
        <strain>AX4</strain>
    </source>
</reference>
<dbReference type="EMBL" id="AAFI02000124">
    <property type="protein sequence ID" value="EAL63063.1"/>
    <property type="molecule type" value="Genomic_DNA"/>
</dbReference>
<dbReference type="RefSeq" id="XP_636566.1">
    <property type="nucleotide sequence ID" value="XM_631474.1"/>
</dbReference>
<dbReference type="SMR" id="Q54IG9"/>
<dbReference type="PaxDb" id="44689-DDB0219380"/>
<dbReference type="EnsemblProtists" id="EAL63063">
    <property type="protein sequence ID" value="EAL63063"/>
    <property type="gene ID" value="DDB_G0288767"/>
</dbReference>
<dbReference type="GeneID" id="8626794"/>
<dbReference type="KEGG" id="ddi:DDB_G0288767"/>
<dbReference type="dictyBase" id="DDB_G0288767"/>
<dbReference type="VEuPathDB" id="AmoebaDB:DDB_G0288767"/>
<dbReference type="HOGENOM" id="CLU_1356857_0_0_1"/>
<dbReference type="InParanoid" id="Q54IG9"/>
<dbReference type="PRO" id="PR:Q54IG9"/>
<dbReference type="Proteomes" id="UP000002195">
    <property type="component" value="Chromosome 5"/>
</dbReference>
<keyword id="KW-1185">Reference proteome</keyword>
<organism>
    <name type="scientific">Dictyostelium discoideum</name>
    <name type="common">Social amoeba</name>
    <dbReference type="NCBI Taxonomy" id="44689"/>
    <lineage>
        <taxon>Eukaryota</taxon>
        <taxon>Amoebozoa</taxon>
        <taxon>Evosea</taxon>
        <taxon>Eumycetozoa</taxon>
        <taxon>Dictyostelia</taxon>
        <taxon>Dictyosteliales</taxon>
        <taxon>Dictyosteliaceae</taxon>
        <taxon>Dictyostelium</taxon>
    </lineage>
</organism>
<proteinExistence type="predicted"/>